<keyword id="KW-0413">Isomerase</keyword>
<keyword id="KW-0456">Lyase</keyword>
<keyword id="KW-0460">Magnesium</keyword>
<keyword id="KW-0479">Metal-binding</keyword>
<keyword id="KW-1185">Reference proteome</keyword>
<name>MBTI_MYCBO</name>
<feature type="chain" id="PRO_0000262084" description="Salicylate synthase">
    <location>
        <begin position="1"/>
        <end position="450"/>
    </location>
</feature>
<feature type="active site" description="Proton donor" evidence="2">
    <location>
        <position position="252"/>
    </location>
</feature>
<feature type="binding site" evidence="1">
    <location>
        <begin position="270"/>
        <end position="271"/>
    </location>
    <ligand>
        <name>substrate</name>
    </ligand>
</feature>
<feature type="binding site" evidence="1">
    <location>
        <position position="297"/>
    </location>
    <ligand>
        <name>Mg(2+)</name>
        <dbReference type="ChEBI" id="CHEBI:18420"/>
    </ligand>
</feature>
<feature type="binding site" evidence="1">
    <location>
        <position position="385"/>
    </location>
    <ligand>
        <name>substrate</name>
    </ligand>
</feature>
<feature type="binding site" evidence="1">
    <location>
        <position position="405"/>
    </location>
    <ligand>
        <name>substrate</name>
    </ligand>
</feature>
<feature type="binding site" evidence="1">
    <location>
        <begin position="419"/>
        <end position="421"/>
    </location>
    <ligand>
        <name>substrate</name>
    </ligand>
</feature>
<feature type="binding site" evidence="1">
    <location>
        <position position="431"/>
    </location>
    <ligand>
        <name>Mg(2+)</name>
        <dbReference type="ChEBI" id="CHEBI:18420"/>
    </ligand>
</feature>
<feature type="binding site" evidence="1">
    <location>
        <position position="434"/>
    </location>
    <ligand>
        <name>Mg(2+)</name>
        <dbReference type="ChEBI" id="CHEBI:18420"/>
    </ligand>
</feature>
<feature type="binding site" evidence="1">
    <location>
        <position position="438"/>
    </location>
    <ligand>
        <name>substrate</name>
    </ligand>
</feature>
<organism>
    <name type="scientific">Mycobacterium bovis (strain ATCC BAA-935 / AF2122/97)</name>
    <dbReference type="NCBI Taxonomy" id="233413"/>
    <lineage>
        <taxon>Bacteria</taxon>
        <taxon>Bacillati</taxon>
        <taxon>Actinomycetota</taxon>
        <taxon>Actinomycetes</taxon>
        <taxon>Mycobacteriales</taxon>
        <taxon>Mycobacteriaceae</taxon>
        <taxon>Mycobacterium</taxon>
        <taxon>Mycobacterium tuberculosis complex</taxon>
    </lineage>
</organism>
<proteinExistence type="inferred from homology"/>
<comment type="function">
    <text evidence="1">Involved in the incorporation of salicylate into the virulence-conferring salicylate-based siderophore mycobactin. Catalyzes the initial conversion of chorismate to yield the intermediate isochorismate (isochorismate synthase activity), and the subsequent elimination of the enolpyruvyl side chain in a lyase reaction to give salicylate (isochorismate pyruvate-lyase activity). In the absence of magnesium, MbtI displays a chorismate mutase activity and converts chorismate to prephenate.</text>
</comment>
<comment type="catalytic activity">
    <reaction evidence="1">
        <text>chorismate = isochorismate</text>
        <dbReference type="Rhea" id="RHEA:18985"/>
        <dbReference type="ChEBI" id="CHEBI:29748"/>
        <dbReference type="ChEBI" id="CHEBI:29780"/>
        <dbReference type="EC" id="5.4.4.2"/>
    </reaction>
</comment>
<comment type="catalytic activity">
    <reaction evidence="1">
        <text>isochorismate = salicylate + pyruvate</text>
        <dbReference type="Rhea" id="RHEA:27874"/>
        <dbReference type="ChEBI" id="CHEBI:15361"/>
        <dbReference type="ChEBI" id="CHEBI:29780"/>
        <dbReference type="ChEBI" id="CHEBI:30762"/>
        <dbReference type="EC" id="4.2.99.21"/>
    </reaction>
</comment>
<comment type="catalytic activity">
    <reaction evidence="1">
        <text>chorismate = prephenate</text>
        <dbReference type="Rhea" id="RHEA:13897"/>
        <dbReference type="ChEBI" id="CHEBI:29748"/>
        <dbReference type="ChEBI" id="CHEBI:29934"/>
        <dbReference type="EC" id="5.4.99.5"/>
    </reaction>
</comment>
<comment type="cofactor">
    <cofactor evidence="1">
        <name>Mg(2+)</name>
        <dbReference type="ChEBI" id="CHEBI:18420"/>
    </cofactor>
</comment>
<comment type="pathway">
    <text evidence="1">Siderophore biosynthesis; mycobactin biosynthesis.</text>
</comment>
<comment type="subunit">
    <text evidence="1">Monomer.</text>
</comment>
<comment type="similarity">
    <text evidence="1">Belongs to the anthranilate synthase component I family. Salicylate synthase subfamily.</text>
</comment>
<protein>
    <recommendedName>
        <fullName evidence="1">Salicylate synthase</fullName>
    </recommendedName>
    <alternativeName>
        <fullName evidence="1">Chorismate mutase</fullName>
        <shortName evidence="1">CM</shortName>
        <ecNumber evidence="1">5.4.99.5</ecNumber>
    </alternativeName>
    <alternativeName>
        <fullName evidence="1">Isochorismate synthase/isochorismate lyase</fullName>
        <ecNumber evidence="1">4.2.99.21</ecNumber>
        <ecNumber evidence="1">5.4.4.2</ecNumber>
    </alternativeName>
    <alternativeName>
        <fullName evidence="1">Mycobactin synthase protein</fullName>
    </alternativeName>
</protein>
<sequence length="450" mass="48754">MSELSVATGAVSTASSSIPMPAGVNPADLAAELAAVVTESVDEDYLLYECDGQWVLAAGVQAMVELDSDELRVIRDGVTRRQQWSGRPGAALGEAVDRLLLETDQAFGWVAFEFGVHRYGLQQRLAPHTPLARVFSPRTRIMVSEKEIRLFDAGIRHREAIDRLLATGVREVPQSRSVDVSDDPSGFRRRVAVAVDEIAAGRYHKVILSRCVEVPFAIDFPLTYRLGRRHNTPVRSFLLQLGGIRALGYSPELVTAVRADGVVITEPLAGTRALGRGPAIDRLARDDLESNSKEIVEHAISVRSSLEEITDIAEPGSAAVIDFMTVRERGSVQHLGSTIRARLDPSSDRMAALEALFPAVTASGIPKAAGVEAIFRLDECPRGLYSGAVVMLSADGGLDAALTLRAAYQVGGRTWLRAGAGIIEESEPEREFEETCEKLSTLTPYLVARQ</sequence>
<reference key="1">
    <citation type="journal article" date="2003" name="Proc. Natl. Acad. Sci. U.S.A.">
        <title>The complete genome sequence of Mycobacterium bovis.</title>
        <authorList>
            <person name="Garnier T."/>
            <person name="Eiglmeier K."/>
            <person name="Camus J.-C."/>
            <person name="Medina N."/>
            <person name="Mansoor H."/>
            <person name="Pryor M."/>
            <person name="Duthoy S."/>
            <person name="Grondin S."/>
            <person name="Lacroix C."/>
            <person name="Monsempe C."/>
            <person name="Simon S."/>
            <person name="Harris B."/>
            <person name="Atkin R."/>
            <person name="Doggett J."/>
            <person name="Mayes R."/>
            <person name="Keating L."/>
            <person name="Wheeler P.R."/>
            <person name="Parkhill J."/>
            <person name="Barrell B.G."/>
            <person name="Cole S.T."/>
            <person name="Gordon S.V."/>
            <person name="Hewinson R.G."/>
        </authorList>
    </citation>
    <scope>NUCLEOTIDE SEQUENCE [LARGE SCALE GENOMIC DNA]</scope>
    <source>
        <strain>ATCC BAA-935 / AF2122/97</strain>
    </source>
</reference>
<reference key="2">
    <citation type="journal article" date="2017" name="Genome Announc.">
        <title>Updated reference genome sequence and annotation of Mycobacterium bovis AF2122/97.</title>
        <authorList>
            <person name="Malone K.M."/>
            <person name="Farrell D."/>
            <person name="Stuber T.P."/>
            <person name="Schubert O.T."/>
            <person name="Aebersold R."/>
            <person name="Robbe-Austerman S."/>
            <person name="Gordon S.V."/>
        </authorList>
    </citation>
    <scope>NUCLEOTIDE SEQUENCE [LARGE SCALE GENOMIC DNA]</scope>
    <scope>GENOME REANNOTATION</scope>
    <source>
        <strain>ATCC BAA-935 / AF2122/97</strain>
    </source>
</reference>
<dbReference type="EC" id="5.4.99.5" evidence="1"/>
<dbReference type="EC" id="4.2.99.21" evidence="1"/>
<dbReference type="EC" id="5.4.4.2" evidence="1"/>
<dbReference type="EMBL" id="LT708304">
    <property type="protein sequence ID" value="SIU01019.1"/>
    <property type="molecule type" value="Genomic_DNA"/>
</dbReference>
<dbReference type="RefSeq" id="NP_856056.1">
    <property type="nucleotide sequence ID" value="NC_002945.3"/>
</dbReference>
<dbReference type="RefSeq" id="WP_003412287.1">
    <property type="nucleotide sequence ID" value="NC_002945.4"/>
</dbReference>
<dbReference type="SMR" id="Q7TYQ1"/>
<dbReference type="KEGG" id="mbo:BQ2027_MB2407C"/>
<dbReference type="PATRIC" id="fig|233413.5.peg.2644"/>
<dbReference type="UniPathway" id="UPA00011"/>
<dbReference type="Proteomes" id="UP000001419">
    <property type="component" value="Chromosome"/>
</dbReference>
<dbReference type="GO" id="GO:0004106">
    <property type="term" value="F:chorismate mutase activity"/>
    <property type="evidence" value="ECO:0000250"/>
    <property type="project" value="UniProtKB"/>
</dbReference>
<dbReference type="GO" id="GO:0043904">
    <property type="term" value="F:isochorismate pyruvate lyase activity"/>
    <property type="evidence" value="ECO:0000250"/>
    <property type="project" value="UniProtKB"/>
</dbReference>
<dbReference type="GO" id="GO:0008909">
    <property type="term" value="F:isochorismate synthase activity"/>
    <property type="evidence" value="ECO:0000250"/>
    <property type="project" value="UniProtKB"/>
</dbReference>
<dbReference type="GO" id="GO:0000287">
    <property type="term" value="F:magnesium ion binding"/>
    <property type="evidence" value="ECO:0000250"/>
    <property type="project" value="UniProtKB"/>
</dbReference>
<dbReference type="GO" id="GO:0016833">
    <property type="term" value="F:oxo-acid-lyase activity"/>
    <property type="evidence" value="ECO:0007669"/>
    <property type="project" value="InterPro"/>
</dbReference>
<dbReference type="GO" id="GO:0019540">
    <property type="term" value="P:catechol-containing siderophore biosynthetic process"/>
    <property type="evidence" value="ECO:0000250"/>
    <property type="project" value="UniProtKB"/>
</dbReference>
<dbReference type="GO" id="GO:0000162">
    <property type="term" value="P:L-tryptophan biosynthetic process"/>
    <property type="evidence" value="ECO:0007669"/>
    <property type="project" value="TreeGrafter"/>
</dbReference>
<dbReference type="GO" id="GO:0009697">
    <property type="term" value="P:salicylic acid biosynthetic process"/>
    <property type="evidence" value="ECO:0000250"/>
    <property type="project" value="UniProtKB"/>
</dbReference>
<dbReference type="FunFam" id="3.60.120.10:FF:000010">
    <property type="entry name" value="Salicylate synthase"/>
    <property type="match status" value="1"/>
</dbReference>
<dbReference type="Gene3D" id="3.60.120.10">
    <property type="entry name" value="Anthranilate synthase"/>
    <property type="match status" value="1"/>
</dbReference>
<dbReference type="InterPro" id="IPR005801">
    <property type="entry name" value="ADC_synthase"/>
</dbReference>
<dbReference type="InterPro" id="IPR019999">
    <property type="entry name" value="Anth_synth_I-like"/>
</dbReference>
<dbReference type="InterPro" id="IPR015890">
    <property type="entry name" value="Chorismate_C"/>
</dbReference>
<dbReference type="InterPro" id="IPR019996">
    <property type="entry name" value="Salicylate_synthase"/>
</dbReference>
<dbReference type="NCBIfam" id="TIGR03494">
    <property type="entry name" value="salicyl_syn"/>
    <property type="match status" value="1"/>
</dbReference>
<dbReference type="PANTHER" id="PTHR11236">
    <property type="entry name" value="AMINOBENZOATE/ANTHRANILATE SYNTHASE"/>
    <property type="match status" value="1"/>
</dbReference>
<dbReference type="PANTHER" id="PTHR11236:SF48">
    <property type="entry name" value="ISOCHORISMATE SYNTHASE MENF"/>
    <property type="match status" value="1"/>
</dbReference>
<dbReference type="Pfam" id="PF00425">
    <property type="entry name" value="Chorismate_bind"/>
    <property type="match status" value="1"/>
</dbReference>
<dbReference type="PRINTS" id="PR00095">
    <property type="entry name" value="ANTSNTHASEI"/>
</dbReference>
<dbReference type="SUPFAM" id="SSF56322">
    <property type="entry name" value="ADC synthase"/>
    <property type="match status" value="1"/>
</dbReference>
<gene>
    <name type="primary">mbtI</name>
    <name type="ordered locus">BQ2027_MB2407C</name>
</gene>
<accession>Q7TYQ1</accession>
<accession>A0A1R3Y117</accession>
<accession>X2BKI5</accession>
<evidence type="ECO:0000250" key="1">
    <source>
        <dbReference type="UniProtKB" id="P9WFX1"/>
    </source>
</evidence>
<evidence type="ECO:0000250" key="2">
    <source>
        <dbReference type="UniProtKB" id="Q9X9I8"/>
    </source>
</evidence>